<feature type="chain" id="PRO_0000344226" description="Ribonuclease kappa-B">
    <location>
        <begin position="1"/>
        <end position="101"/>
    </location>
</feature>
<feature type="transmembrane region" description="Helical" evidence="2">
    <location>
        <begin position="13"/>
        <end position="33"/>
    </location>
</feature>
<feature type="transmembrane region" description="Helical" evidence="2">
    <location>
        <begin position="68"/>
        <end position="88"/>
    </location>
</feature>
<proteinExistence type="inferred from homology"/>
<organism>
    <name type="scientific">Xenopus laevis</name>
    <name type="common">African clawed frog</name>
    <dbReference type="NCBI Taxonomy" id="8355"/>
    <lineage>
        <taxon>Eukaryota</taxon>
        <taxon>Metazoa</taxon>
        <taxon>Chordata</taxon>
        <taxon>Craniata</taxon>
        <taxon>Vertebrata</taxon>
        <taxon>Euteleostomi</taxon>
        <taxon>Amphibia</taxon>
        <taxon>Batrachia</taxon>
        <taxon>Anura</taxon>
        <taxon>Pipoidea</taxon>
        <taxon>Pipidae</taxon>
        <taxon>Xenopodinae</taxon>
        <taxon>Xenopus</taxon>
        <taxon>Xenopus</taxon>
    </lineage>
</organism>
<keyword id="KW-0255">Endonuclease</keyword>
<keyword id="KW-0378">Hydrolase</keyword>
<keyword id="KW-0472">Membrane</keyword>
<keyword id="KW-0540">Nuclease</keyword>
<keyword id="KW-1185">Reference proteome</keyword>
<keyword id="KW-0812">Transmembrane</keyword>
<keyword id="KW-1133">Transmembrane helix</keyword>
<dbReference type="EC" id="3.1.-.-"/>
<dbReference type="EMBL" id="BC093561">
    <property type="protein sequence ID" value="AAH93561.1"/>
    <property type="molecule type" value="mRNA"/>
</dbReference>
<dbReference type="RefSeq" id="NP_001090277.1">
    <property type="nucleotide sequence ID" value="NM_001096808.1"/>
</dbReference>
<dbReference type="SMR" id="Q566G2"/>
<dbReference type="DNASU" id="779185"/>
<dbReference type="GeneID" id="779185"/>
<dbReference type="KEGG" id="xla:779185"/>
<dbReference type="AGR" id="Xenbase:XB-GENE-6252970"/>
<dbReference type="CTD" id="779185"/>
<dbReference type="Xenbase" id="XB-GENE-6252970">
    <property type="gene designation" value="rnasek.L"/>
</dbReference>
<dbReference type="OMA" id="SNNCFIA"/>
<dbReference type="OrthoDB" id="67317at2759"/>
<dbReference type="Proteomes" id="UP000186698">
    <property type="component" value="Chromosome 3L"/>
</dbReference>
<dbReference type="Bgee" id="779185">
    <property type="expression patterns" value="Expressed in brain and 19 other cell types or tissues"/>
</dbReference>
<dbReference type="GO" id="GO:0016020">
    <property type="term" value="C:membrane"/>
    <property type="evidence" value="ECO:0007669"/>
    <property type="project" value="UniProtKB-SubCell"/>
</dbReference>
<dbReference type="GO" id="GO:0004521">
    <property type="term" value="F:RNA endonuclease activity"/>
    <property type="evidence" value="ECO:0000250"/>
    <property type="project" value="UniProtKB"/>
</dbReference>
<dbReference type="InterPro" id="IPR056552">
    <property type="entry name" value="Ribonucl_Kappa"/>
</dbReference>
<dbReference type="InterPro" id="IPR026770">
    <property type="entry name" value="RNase_K"/>
</dbReference>
<dbReference type="PANTHER" id="PTHR31733">
    <property type="entry name" value="RIBONUCLEASE KAPPA"/>
    <property type="match status" value="1"/>
</dbReference>
<dbReference type="Pfam" id="PF23489">
    <property type="entry name" value="V-ATPase_su_f"/>
    <property type="match status" value="1"/>
</dbReference>
<gene>
    <name type="primary">rnasek-b</name>
</gene>
<accession>Q566G2</accession>
<reference key="1">
    <citation type="submission" date="2005-04" db="EMBL/GenBank/DDBJ databases">
        <authorList>
            <consortium name="NIH - Xenopus Gene Collection (XGC) project"/>
        </authorList>
    </citation>
    <scope>NUCLEOTIDE SEQUENCE [LARGE SCALE MRNA]</scope>
    <source>
        <tissue>Eye</tissue>
    </source>
</reference>
<protein>
    <recommendedName>
        <fullName>Ribonuclease kappa-B</fullName>
        <shortName>RNase K-B</shortName>
        <shortName>RNase kappa-B</shortName>
        <ecNumber>3.1.-.-</ecNumber>
    </recommendedName>
</protein>
<evidence type="ECO:0000250" key="1"/>
<evidence type="ECO:0000255" key="2"/>
<evidence type="ECO:0000305" key="3"/>
<comment type="function">
    <text evidence="1">Endoribonuclease which preferentially cleaves ApU and ApG phosphodiester bonds.</text>
</comment>
<comment type="subcellular location">
    <subcellularLocation>
        <location evidence="3">Membrane</location>
        <topology evidence="3">Multi-pass membrane protein</topology>
    </subcellularLocation>
</comment>
<comment type="similarity">
    <text evidence="3">Belongs to the RNase K family.</text>
</comment>
<name>RNKB_XENLA</name>
<sequence length="101" mass="11346">MVSLLCCGPKLAACGIVLSVWGVIMLVLLGVFFNVHSAVLIEDVPFTEADMFEDPNPPAKMYRLYEQVSYNCFIAAAIYIVLGGFSFCQVRLNKRKEYMVR</sequence>